<comment type="function">
    <text evidence="1">Catalyzes the phosphorylation of the position 2 hydroxy group of 4-diphosphocytidyl-2C-methyl-D-erythritol.</text>
</comment>
<comment type="catalytic activity">
    <reaction evidence="1">
        <text>4-CDP-2-C-methyl-D-erythritol + ATP = 4-CDP-2-C-methyl-D-erythritol 2-phosphate + ADP + H(+)</text>
        <dbReference type="Rhea" id="RHEA:18437"/>
        <dbReference type="ChEBI" id="CHEBI:15378"/>
        <dbReference type="ChEBI" id="CHEBI:30616"/>
        <dbReference type="ChEBI" id="CHEBI:57823"/>
        <dbReference type="ChEBI" id="CHEBI:57919"/>
        <dbReference type="ChEBI" id="CHEBI:456216"/>
        <dbReference type="EC" id="2.7.1.148"/>
    </reaction>
</comment>
<comment type="pathway">
    <text evidence="1">Isoprenoid biosynthesis; isopentenyl diphosphate biosynthesis via DXP pathway; isopentenyl diphosphate from 1-deoxy-D-xylulose 5-phosphate: step 3/6.</text>
</comment>
<comment type="similarity">
    <text evidence="1">Belongs to the GHMP kinase family. IspE subfamily.</text>
</comment>
<dbReference type="EC" id="2.7.1.148" evidence="1"/>
<dbReference type="EMBL" id="CP000554">
    <property type="protein sequence ID" value="ABM78362.1"/>
    <property type="molecule type" value="Genomic_DNA"/>
</dbReference>
<dbReference type="RefSeq" id="WP_011826251.1">
    <property type="nucleotide sequence ID" value="NC_008820.1"/>
</dbReference>
<dbReference type="SMR" id="A2CA52"/>
<dbReference type="STRING" id="59922.P9303_16181"/>
<dbReference type="KEGG" id="pmf:P9303_16181"/>
<dbReference type="HOGENOM" id="CLU_053057_1_1_3"/>
<dbReference type="BioCyc" id="PMAR59922:G1G80-1410-MONOMER"/>
<dbReference type="UniPathway" id="UPA00056">
    <property type="reaction ID" value="UER00094"/>
</dbReference>
<dbReference type="Proteomes" id="UP000002274">
    <property type="component" value="Chromosome"/>
</dbReference>
<dbReference type="GO" id="GO:0050515">
    <property type="term" value="F:4-(cytidine 5'-diphospho)-2-C-methyl-D-erythritol kinase activity"/>
    <property type="evidence" value="ECO:0007669"/>
    <property type="project" value="UniProtKB-UniRule"/>
</dbReference>
<dbReference type="GO" id="GO:0005524">
    <property type="term" value="F:ATP binding"/>
    <property type="evidence" value="ECO:0007669"/>
    <property type="project" value="UniProtKB-UniRule"/>
</dbReference>
<dbReference type="GO" id="GO:0019288">
    <property type="term" value="P:isopentenyl diphosphate biosynthetic process, methylerythritol 4-phosphate pathway"/>
    <property type="evidence" value="ECO:0007669"/>
    <property type="project" value="UniProtKB-UniRule"/>
</dbReference>
<dbReference type="GO" id="GO:0016114">
    <property type="term" value="P:terpenoid biosynthetic process"/>
    <property type="evidence" value="ECO:0007669"/>
    <property type="project" value="InterPro"/>
</dbReference>
<dbReference type="Gene3D" id="3.30.230.10">
    <property type="match status" value="1"/>
</dbReference>
<dbReference type="Gene3D" id="3.30.70.890">
    <property type="entry name" value="GHMP kinase, C-terminal domain"/>
    <property type="match status" value="1"/>
</dbReference>
<dbReference type="HAMAP" id="MF_00061">
    <property type="entry name" value="IspE"/>
    <property type="match status" value="1"/>
</dbReference>
<dbReference type="InterPro" id="IPR013750">
    <property type="entry name" value="GHMP_kinase_C_dom"/>
</dbReference>
<dbReference type="InterPro" id="IPR036554">
    <property type="entry name" value="GHMP_kinase_C_sf"/>
</dbReference>
<dbReference type="InterPro" id="IPR006204">
    <property type="entry name" value="GHMP_kinase_N_dom"/>
</dbReference>
<dbReference type="InterPro" id="IPR004424">
    <property type="entry name" value="IspE"/>
</dbReference>
<dbReference type="InterPro" id="IPR020568">
    <property type="entry name" value="Ribosomal_Su5_D2-typ_SF"/>
</dbReference>
<dbReference type="InterPro" id="IPR014721">
    <property type="entry name" value="Ribsml_uS5_D2-typ_fold_subgr"/>
</dbReference>
<dbReference type="NCBIfam" id="TIGR00154">
    <property type="entry name" value="ispE"/>
    <property type="match status" value="1"/>
</dbReference>
<dbReference type="PANTHER" id="PTHR43527">
    <property type="entry name" value="4-DIPHOSPHOCYTIDYL-2-C-METHYL-D-ERYTHRITOL KINASE, CHLOROPLASTIC"/>
    <property type="match status" value="1"/>
</dbReference>
<dbReference type="PANTHER" id="PTHR43527:SF2">
    <property type="entry name" value="4-DIPHOSPHOCYTIDYL-2-C-METHYL-D-ERYTHRITOL KINASE, CHLOROPLASTIC"/>
    <property type="match status" value="1"/>
</dbReference>
<dbReference type="Pfam" id="PF08544">
    <property type="entry name" value="GHMP_kinases_C"/>
    <property type="match status" value="1"/>
</dbReference>
<dbReference type="Pfam" id="PF00288">
    <property type="entry name" value="GHMP_kinases_N"/>
    <property type="match status" value="1"/>
</dbReference>
<dbReference type="PIRSF" id="PIRSF010376">
    <property type="entry name" value="IspE"/>
    <property type="match status" value="1"/>
</dbReference>
<dbReference type="SUPFAM" id="SSF55060">
    <property type="entry name" value="GHMP Kinase, C-terminal domain"/>
    <property type="match status" value="1"/>
</dbReference>
<dbReference type="SUPFAM" id="SSF54211">
    <property type="entry name" value="Ribosomal protein S5 domain 2-like"/>
    <property type="match status" value="1"/>
</dbReference>
<reference key="1">
    <citation type="journal article" date="2007" name="PLoS Genet.">
        <title>Patterns and implications of gene gain and loss in the evolution of Prochlorococcus.</title>
        <authorList>
            <person name="Kettler G.C."/>
            <person name="Martiny A.C."/>
            <person name="Huang K."/>
            <person name="Zucker J."/>
            <person name="Coleman M.L."/>
            <person name="Rodrigue S."/>
            <person name="Chen F."/>
            <person name="Lapidus A."/>
            <person name="Ferriera S."/>
            <person name="Johnson J."/>
            <person name="Steglich C."/>
            <person name="Church G.M."/>
            <person name="Richardson P."/>
            <person name="Chisholm S.W."/>
        </authorList>
    </citation>
    <scope>NUCLEOTIDE SEQUENCE [LARGE SCALE GENOMIC DNA]</scope>
    <source>
        <strain>MIT 9303</strain>
    </source>
</reference>
<proteinExistence type="inferred from homology"/>
<gene>
    <name evidence="1" type="primary">ispE</name>
    <name type="ordered locus">P9303_16181</name>
</gene>
<feature type="chain" id="PRO_1000007871" description="4-diphosphocytidyl-2-C-methyl-D-erythritol kinase">
    <location>
        <begin position="1"/>
        <end position="319"/>
    </location>
</feature>
<feature type="active site" evidence="1">
    <location>
        <position position="21"/>
    </location>
</feature>
<feature type="active site" evidence="1">
    <location>
        <position position="148"/>
    </location>
</feature>
<feature type="binding site" evidence="1">
    <location>
        <begin position="106"/>
        <end position="116"/>
    </location>
    <ligand>
        <name>ATP</name>
        <dbReference type="ChEBI" id="CHEBI:30616"/>
    </ligand>
</feature>
<accession>A2CA52</accession>
<name>ISPE_PROM3</name>
<keyword id="KW-0067">ATP-binding</keyword>
<keyword id="KW-0414">Isoprene biosynthesis</keyword>
<keyword id="KW-0418">Kinase</keyword>
<keyword id="KW-0547">Nucleotide-binding</keyword>
<keyword id="KW-0808">Transferase</keyword>
<evidence type="ECO:0000255" key="1">
    <source>
        <dbReference type="HAMAP-Rule" id="MF_00061"/>
    </source>
</evidence>
<protein>
    <recommendedName>
        <fullName evidence="1">4-diphosphocytidyl-2-C-methyl-D-erythritol kinase</fullName>
        <shortName evidence="1">CMK</shortName>
        <ecNumber evidence="1">2.7.1.148</ecNumber>
    </recommendedName>
    <alternativeName>
        <fullName evidence="1">4-(cytidine-5'-diphospho)-2-C-methyl-D-erythritol kinase</fullName>
    </alternativeName>
</protein>
<sequence>MSISSPSAASGHLVSVSAPAKINLHLEVLGLRSDGFHELAMVMQSIELADQLHFRNTADGTISLRCDDSSLSTAGDNLIVQAAHLLRERSGFSELGAAIELQKRIPIGAGLAGGSSDGAATLVGLNGLWNLNFSQGQLEGFAAELGSDMPFCLAGGSQLCFGRGERLESLQAMQASMAVVLVKDPSVSVSTPWAYGRCKELFRSRYLSQESDFEQRRQQLRESSWLNPLRADDPPPLHNDLQAVVAPEVFAVQTTLKLLSDLPGSLAVAMSGSGPSCFALFADVDSAQAALKRQQPAFDAAGLSSWCCAFRSEGIKLEA</sequence>
<organism>
    <name type="scientific">Prochlorococcus marinus (strain MIT 9303)</name>
    <dbReference type="NCBI Taxonomy" id="59922"/>
    <lineage>
        <taxon>Bacteria</taxon>
        <taxon>Bacillati</taxon>
        <taxon>Cyanobacteriota</taxon>
        <taxon>Cyanophyceae</taxon>
        <taxon>Synechococcales</taxon>
        <taxon>Prochlorococcaceae</taxon>
        <taxon>Prochlorococcus</taxon>
    </lineage>
</organism>